<sequence length="208" mass="24008">MTNKDESVEKNTESTVEETNVKQNIDDSVEQAEESKGHLQDEAIEETSDENVIEEIDPKDQKINELQQLADENEEKYLRLYAEFENYKRRIQKENEINKTYQAQRVLTDILPAIDNIERALQIEGDDETFKSLQKGVQMVHESLINALKDNGLEVIKTEGEAFDPNIHQAVVQDDNPDFESGEITQELQKGYKLKDRVLRPSMVKVNQ</sequence>
<feature type="chain" id="PRO_0000113859" description="Protein GrpE">
    <location>
        <begin position="1"/>
        <end position="208"/>
    </location>
</feature>
<feature type="region of interest" description="Disordered" evidence="2">
    <location>
        <begin position="1"/>
        <end position="51"/>
    </location>
</feature>
<feature type="compositionally biased region" description="Basic and acidic residues" evidence="2">
    <location>
        <begin position="1"/>
        <end position="12"/>
    </location>
</feature>
<feature type="compositionally biased region" description="Polar residues" evidence="2">
    <location>
        <begin position="13"/>
        <end position="23"/>
    </location>
</feature>
<feature type="compositionally biased region" description="Acidic residues" evidence="2">
    <location>
        <begin position="42"/>
        <end position="51"/>
    </location>
</feature>
<accession>Q6G8Y6</accession>
<gene>
    <name evidence="1" type="primary">grpE</name>
    <name type="ordered locus">SAS1519</name>
</gene>
<name>GRPE_STAAS</name>
<reference key="1">
    <citation type="journal article" date="2004" name="Proc. Natl. Acad. Sci. U.S.A.">
        <title>Complete genomes of two clinical Staphylococcus aureus strains: evidence for the rapid evolution of virulence and drug resistance.</title>
        <authorList>
            <person name="Holden M.T.G."/>
            <person name="Feil E.J."/>
            <person name="Lindsay J.A."/>
            <person name="Peacock S.J."/>
            <person name="Day N.P.J."/>
            <person name="Enright M.C."/>
            <person name="Foster T.J."/>
            <person name="Moore C.E."/>
            <person name="Hurst L."/>
            <person name="Atkin R."/>
            <person name="Barron A."/>
            <person name="Bason N."/>
            <person name="Bentley S.D."/>
            <person name="Chillingworth C."/>
            <person name="Chillingworth T."/>
            <person name="Churcher C."/>
            <person name="Clark L."/>
            <person name="Corton C."/>
            <person name="Cronin A."/>
            <person name="Doggett J."/>
            <person name="Dowd L."/>
            <person name="Feltwell T."/>
            <person name="Hance Z."/>
            <person name="Harris B."/>
            <person name="Hauser H."/>
            <person name="Holroyd S."/>
            <person name="Jagels K."/>
            <person name="James K.D."/>
            <person name="Lennard N."/>
            <person name="Line A."/>
            <person name="Mayes R."/>
            <person name="Moule S."/>
            <person name="Mungall K."/>
            <person name="Ormond D."/>
            <person name="Quail M.A."/>
            <person name="Rabbinowitsch E."/>
            <person name="Rutherford K.M."/>
            <person name="Sanders M."/>
            <person name="Sharp S."/>
            <person name="Simmonds M."/>
            <person name="Stevens K."/>
            <person name="Whitehead S."/>
            <person name="Barrell B.G."/>
            <person name="Spratt B.G."/>
            <person name="Parkhill J."/>
        </authorList>
    </citation>
    <scope>NUCLEOTIDE SEQUENCE [LARGE SCALE GENOMIC DNA]</scope>
    <source>
        <strain>MSSA476</strain>
    </source>
</reference>
<evidence type="ECO:0000255" key="1">
    <source>
        <dbReference type="HAMAP-Rule" id="MF_01151"/>
    </source>
</evidence>
<evidence type="ECO:0000256" key="2">
    <source>
        <dbReference type="SAM" id="MobiDB-lite"/>
    </source>
</evidence>
<protein>
    <recommendedName>
        <fullName evidence="1">Protein GrpE</fullName>
    </recommendedName>
    <alternativeName>
        <fullName evidence="1">HSP-70 cofactor</fullName>
    </alternativeName>
</protein>
<organism>
    <name type="scientific">Staphylococcus aureus (strain MSSA476)</name>
    <dbReference type="NCBI Taxonomy" id="282459"/>
    <lineage>
        <taxon>Bacteria</taxon>
        <taxon>Bacillati</taxon>
        <taxon>Bacillota</taxon>
        <taxon>Bacilli</taxon>
        <taxon>Bacillales</taxon>
        <taxon>Staphylococcaceae</taxon>
        <taxon>Staphylococcus</taxon>
    </lineage>
</organism>
<keyword id="KW-0143">Chaperone</keyword>
<keyword id="KW-0963">Cytoplasm</keyword>
<keyword id="KW-0346">Stress response</keyword>
<comment type="function">
    <text evidence="1">Participates actively in the response to hyperosmotic and heat shock by preventing the aggregation of stress-denatured proteins, in association with DnaK and GrpE. It is the nucleotide exchange factor for DnaK and may function as a thermosensor. Unfolded proteins bind initially to DnaJ; upon interaction with the DnaJ-bound protein, DnaK hydrolyzes its bound ATP, resulting in the formation of a stable complex. GrpE releases ADP from DnaK; ATP binding to DnaK triggers the release of the substrate protein, thus completing the reaction cycle. Several rounds of ATP-dependent interactions between DnaJ, DnaK and GrpE are required for fully efficient folding.</text>
</comment>
<comment type="subunit">
    <text evidence="1">Homodimer.</text>
</comment>
<comment type="subcellular location">
    <subcellularLocation>
        <location evidence="1">Cytoplasm</location>
    </subcellularLocation>
</comment>
<comment type="similarity">
    <text evidence="1">Belongs to the GrpE family.</text>
</comment>
<dbReference type="EMBL" id="BX571857">
    <property type="protein sequence ID" value="CAG43320.1"/>
    <property type="molecule type" value="Genomic_DNA"/>
</dbReference>
<dbReference type="RefSeq" id="WP_000182215.1">
    <property type="nucleotide sequence ID" value="NC_002953.3"/>
</dbReference>
<dbReference type="SMR" id="Q6G8Y6"/>
<dbReference type="KEGG" id="sas:SAS1519"/>
<dbReference type="HOGENOM" id="CLU_057217_6_3_9"/>
<dbReference type="GO" id="GO:0005737">
    <property type="term" value="C:cytoplasm"/>
    <property type="evidence" value="ECO:0007669"/>
    <property type="project" value="UniProtKB-SubCell"/>
</dbReference>
<dbReference type="GO" id="GO:0000774">
    <property type="term" value="F:adenyl-nucleotide exchange factor activity"/>
    <property type="evidence" value="ECO:0007669"/>
    <property type="project" value="InterPro"/>
</dbReference>
<dbReference type="GO" id="GO:0042803">
    <property type="term" value="F:protein homodimerization activity"/>
    <property type="evidence" value="ECO:0007669"/>
    <property type="project" value="InterPro"/>
</dbReference>
<dbReference type="GO" id="GO:0051087">
    <property type="term" value="F:protein-folding chaperone binding"/>
    <property type="evidence" value="ECO:0007669"/>
    <property type="project" value="InterPro"/>
</dbReference>
<dbReference type="GO" id="GO:0051082">
    <property type="term" value="F:unfolded protein binding"/>
    <property type="evidence" value="ECO:0007669"/>
    <property type="project" value="TreeGrafter"/>
</dbReference>
<dbReference type="GO" id="GO:0006457">
    <property type="term" value="P:protein folding"/>
    <property type="evidence" value="ECO:0007669"/>
    <property type="project" value="InterPro"/>
</dbReference>
<dbReference type="CDD" id="cd00446">
    <property type="entry name" value="GrpE"/>
    <property type="match status" value="1"/>
</dbReference>
<dbReference type="FunFam" id="2.30.22.10:FF:000001">
    <property type="entry name" value="Protein GrpE"/>
    <property type="match status" value="1"/>
</dbReference>
<dbReference type="FunFam" id="3.90.20.20:FF:000002">
    <property type="entry name" value="Protein GrpE"/>
    <property type="match status" value="1"/>
</dbReference>
<dbReference type="Gene3D" id="3.90.20.20">
    <property type="match status" value="1"/>
</dbReference>
<dbReference type="Gene3D" id="2.30.22.10">
    <property type="entry name" value="Head domain of nucleotide exchange factor GrpE"/>
    <property type="match status" value="1"/>
</dbReference>
<dbReference type="HAMAP" id="MF_01151">
    <property type="entry name" value="GrpE"/>
    <property type="match status" value="1"/>
</dbReference>
<dbReference type="InterPro" id="IPR000740">
    <property type="entry name" value="GrpE"/>
</dbReference>
<dbReference type="InterPro" id="IPR013805">
    <property type="entry name" value="GrpE_coiled_coil"/>
</dbReference>
<dbReference type="InterPro" id="IPR009012">
    <property type="entry name" value="GrpE_head"/>
</dbReference>
<dbReference type="NCBIfam" id="NF010738">
    <property type="entry name" value="PRK14140.1"/>
    <property type="match status" value="1"/>
</dbReference>
<dbReference type="PANTHER" id="PTHR21237">
    <property type="entry name" value="GRPE PROTEIN"/>
    <property type="match status" value="1"/>
</dbReference>
<dbReference type="PANTHER" id="PTHR21237:SF23">
    <property type="entry name" value="GRPE PROTEIN HOMOLOG, MITOCHONDRIAL"/>
    <property type="match status" value="1"/>
</dbReference>
<dbReference type="Pfam" id="PF01025">
    <property type="entry name" value="GrpE"/>
    <property type="match status" value="1"/>
</dbReference>
<dbReference type="PRINTS" id="PR00773">
    <property type="entry name" value="GRPEPROTEIN"/>
</dbReference>
<dbReference type="SUPFAM" id="SSF58014">
    <property type="entry name" value="Coiled-coil domain of nucleotide exchange factor GrpE"/>
    <property type="match status" value="1"/>
</dbReference>
<dbReference type="SUPFAM" id="SSF51064">
    <property type="entry name" value="Head domain of nucleotide exchange factor GrpE"/>
    <property type="match status" value="1"/>
</dbReference>
<dbReference type="PROSITE" id="PS01071">
    <property type="entry name" value="GRPE"/>
    <property type="match status" value="1"/>
</dbReference>
<proteinExistence type="inferred from homology"/>